<evidence type="ECO:0000250" key="1"/>
<evidence type="ECO:0000255" key="2"/>
<evidence type="ECO:0000305" key="3"/>
<dbReference type="EC" id="2.3.-.-"/>
<dbReference type="EMBL" id="AACD01000013">
    <property type="protein sequence ID" value="EAA65657.1"/>
    <property type="molecule type" value="Genomic_DNA"/>
</dbReference>
<dbReference type="EMBL" id="BN001308">
    <property type="protein sequence ID" value="CBF88706.1"/>
    <property type="molecule type" value="Genomic_DNA"/>
</dbReference>
<dbReference type="RefSeq" id="XP_658431.1">
    <property type="nucleotide sequence ID" value="XM_653339.1"/>
</dbReference>
<dbReference type="SMR" id="Q5BF53"/>
<dbReference type="FunCoup" id="Q5BF53">
    <property type="interactions" value="548"/>
</dbReference>
<dbReference type="STRING" id="227321.Q5BF53"/>
<dbReference type="GlyCosmos" id="Q5BF53">
    <property type="glycosylation" value="1 site, No reported glycans"/>
</dbReference>
<dbReference type="EnsemblFungi" id="CBF88706">
    <property type="protein sequence ID" value="CBF88706"/>
    <property type="gene ID" value="ANIA_00827"/>
</dbReference>
<dbReference type="KEGG" id="ani:ANIA_00827"/>
<dbReference type="eggNOG" id="KOG0411">
    <property type="taxonomic scope" value="Eukaryota"/>
</dbReference>
<dbReference type="HOGENOM" id="CLU_020802_2_2_1"/>
<dbReference type="InParanoid" id="Q5BF53"/>
<dbReference type="OMA" id="GLYVMQP"/>
<dbReference type="OrthoDB" id="15270at2759"/>
<dbReference type="UniPathway" id="UPA00196"/>
<dbReference type="Proteomes" id="UP000000560">
    <property type="component" value="Chromosome VIII"/>
</dbReference>
<dbReference type="GO" id="GO:0005789">
    <property type="term" value="C:endoplasmic reticulum membrane"/>
    <property type="evidence" value="ECO:0007669"/>
    <property type="project" value="UniProtKB-SubCell"/>
</dbReference>
<dbReference type="GO" id="GO:0032216">
    <property type="term" value="F:glucosaminyl-phosphatidylinositol O-acyltransferase activity"/>
    <property type="evidence" value="ECO:0000318"/>
    <property type="project" value="GO_Central"/>
</dbReference>
<dbReference type="GO" id="GO:0006506">
    <property type="term" value="P:GPI anchor biosynthetic process"/>
    <property type="evidence" value="ECO:0000318"/>
    <property type="project" value="GO_Central"/>
</dbReference>
<dbReference type="InterPro" id="IPR009447">
    <property type="entry name" value="PIGW/GWT1"/>
</dbReference>
<dbReference type="PANTHER" id="PTHR20661">
    <property type="entry name" value="PHOSPHATIDYLINOSITOL-GLYCAN BIOSYNTHESIS CLASS W PROTEIN"/>
    <property type="match status" value="1"/>
</dbReference>
<dbReference type="PANTHER" id="PTHR20661:SF0">
    <property type="entry name" value="PHOSPHATIDYLINOSITOL-GLYCAN BIOSYNTHESIS CLASS W PROTEIN"/>
    <property type="match status" value="1"/>
</dbReference>
<dbReference type="Pfam" id="PF06423">
    <property type="entry name" value="GWT1"/>
    <property type="match status" value="1"/>
</dbReference>
<dbReference type="PIRSF" id="PIRSF017321">
    <property type="entry name" value="GWT1"/>
    <property type="match status" value="1"/>
</dbReference>
<feature type="chain" id="PRO_0000246290" description="GPI-anchored wall transfer protein 1">
    <location>
        <begin position="1"/>
        <end position="474"/>
    </location>
</feature>
<feature type="transmembrane region" description="Helical" evidence="2">
    <location>
        <begin position="21"/>
        <end position="41"/>
    </location>
</feature>
<feature type="transmembrane region" description="Helical" evidence="2">
    <location>
        <begin position="54"/>
        <end position="74"/>
    </location>
</feature>
<feature type="transmembrane region" description="Helical" evidence="2">
    <location>
        <begin position="75"/>
        <end position="95"/>
    </location>
</feature>
<feature type="transmembrane region" description="Helical" evidence="2">
    <location>
        <begin position="125"/>
        <end position="145"/>
    </location>
</feature>
<feature type="transmembrane region" description="Helical" evidence="2">
    <location>
        <begin position="160"/>
        <end position="180"/>
    </location>
</feature>
<feature type="transmembrane region" description="Helical" evidence="2">
    <location>
        <begin position="304"/>
        <end position="324"/>
    </location>
</feature>
<feature type="transmembrane region" description="Helical" evidence="2">
    <location>
        <begin position="361"/>
        <end position="381"/>
    </location>
</feature>
<feature type="transmembrane region" description="Helical" evidence="2">
    <location>
        <begin position="420"/>
        <end position="440"/>
    </location>
</feature>
<feature type="transmembrane region" description="Helical" evidence="2">
    <location>
        <begin position="447"/>
        <end position="467"/>
    </location>
</feature>
<feature type="glycosylation site" description="N-linked (GlcNAc...) asparagine" evidence="2">
    <location>
        <position position="15"/>
    </location>
</feature>
<accession>Q5BF53</accession>
<accession>C8VQE8</accession>
<protein>
    <recommendedName>
        <fullName>GPI-anchored wall transfer protein 1</fullName>
        <ecNumber>2.3.-.-</ecNumber>
    </recommendedName>
</protein>
<proteinExistence type="inferred from homology"/>
<gene>
    <name type="primary">gwt1</name>
    <name type="ORF">AN0827</name>
</gene>
<organism>
    <name type="scientific">Emericella nidulans (strain FGSC A4 / ATCC 38163 / CBS 112.46 / NRRL 194 / M139)</name>
    <name type="common">Aspergillus nidulans</name>
    <dbReference type="NCBI Taxonomy" id="227321"/>
    <lineage>
        <taxon>Eukaryota</taxon>
        <taxon>Fungi</taxon>
        <taxon>Dikarya</taxon>
        <taxon>Ascomycota</taxon>
        <taxon>Pezizomycotina</taxon>
        <taxon>Eurotiomycetes</taxon>
        <taxon>Eurotiomycetidae</taxon>
        <taxon>Eurotiales</taxon>
        <taxon>Aspergillaceae</taxon>
        <taxon>Aspergillus</taxon>
        <taxon>Aspergillus subgen. Nidulantes</taxon>
    </lineage>
</organism>
<name>GWT1_EMENI</name>
<keyword id="KW-0012">Acyltransferase</keyword>
<keyword id="KW-0256">Endoplasmic reticulum</keyword>
<keyword id="KW-0325">Glycoprotein</keyword>
<keyword id="KW-0337">GPI-anchor biosynthesis</keyword>
<keyword id="KW-0472">Membrane</keyword>
<keyword id="KW-1185">Reference proteome</keyword>
<keyword id="KW-0808">Transferase</keyword>
<keyword id="KW-0812">Transmembrane</keyword>
<keyword id="KW-1133">Transmembrane helix</keyword>
<reference key="1">
    <citation type="journal article" date="2005" name="Nature">
        <title>Sequencing of Aspergillus nidulans and comparative analysis with A. fumigatus and A. oryzae.</title>
        <authorList>
            <person name="Galagan J.E."/>
            <person name="Calvo S.E."/>
            <person name="Cuomo C."/>
            <person name="Ma L.-J."/>
            <person name="Wortman J.R."/>
            <person name="Batzoglou S."/>
            <person name="Lee S.-I."/>
            <person name="Bastuerkmen M."/>
            <person name="Spevak C.C."/>
            <person name="Clutterbuck J."/>
            <person name="Kapitonov V."/>
            <person name="Jurka J."/>
            <person name="Scazzocchio C."/>
            <person name="Farman M.L."/>
            <person name="Butler J."/>
            <person name="Purcell S."/>
            <person name="Harris S."/>
            <person name="Braus G.H."/>
            <person name="Draht O."/>
            <person name="Busch S."/>
            <person name="D'Enfert C."/>
            <person name="Bouchier C."/>
            <person name="Goldman G.H."/>
            <person name="Bell-Pedersen D."/>
            <person name="Griffiths-Jones S."/>
            <person name="Doonan J.H."/>
            <person name="Yu J."/>
            <person name="Vienken K."/>
            <person name="Pain A."/>
            <person name="Freitag M."/>
            <person name="Selker E.U."/>
            <person name="Archer D.B."/>
            <person name="Penalva M.A."/>
            <person name="Oakley B.R."/>
            <person name="Momany M."/>
            <person name="Tanaka T."/>
            <person name="Kumagai T."/>
            <person name="Asai K."/>
            <person name="Machida M."/>
            <person name="Nierman W.C."/>
            <person name="Denning D.W."/>
            <person name="Caddick M.X."/>
            <person name="Hynes M."/>
            <person name="Paoletti M."/>
            <person name="Fischer R."/>
            <person name="Miller B.L."/>
            <person name="Dyer P.S."/>
            <person name="Sachs M.S."/>
            <person name="Osmani S.A."/>
            <person name="Birren B.W."/>
        </authorList>
    </citation>
    <scope>NUCLEOTIDE SEQUENCE [LARGE SCALE GENOMIC DNA]</scope>
    <source>
        <strain>FGSC A4 / ATCC 38163 / CBS 112.46 / NRRL 194 / M139</strain>
    </source>
</reference>
<reference key="2">
    <citation type="journal article" date="2009" name="Fungal Genet. Biol.">
        <title>The 2008 update of the Aspergillus nidulans genome annotation: a community effort.</title>
        <authorList>
            <person name="Wortman J.R."/>
            <person name="Gilsenan J.M."/>
            <person name="Joardar V."/>
            <person name="Deegan J."/>
            <person name="Clutterbuck J."/>
            <person name="Andersen M.R."/>
            <person name="Archer D."/>
            <person name="Bencina M."/>
            <person name="Braus G."/>
            <person name="Coutinho P."/>
            <person name="von Dohren H."/>
            <person name="Doonan J."/>
            <person name="Driessen A.J."/>
            <person name="Durek P."/>
            <person name="Espeso E."/>
            <person name="Fekete E."/>
            <person name="Flipphi M."/>
            <person name="Estrada C.G."/>
            <person name="Geysens S."/>
            <person name="Goldman G."/>
            <person name="de Groot P.W."/>
            <person name="Hansen K."/>
            <person name="Harris S.D."/>
            <person name="Heinekamp T."/>
            <person name="Helmstaedt K."/>
            <person name="Henrissat B."/>
            <person name="Hofmann G."/>
            <person name="Homan T."/>
            <person name="Horio T."/>
            <person name="Horiuchi H."/>
            <person name="James S."/>
            <person name="Jones M."/>
            <person name="Karaffa L."/>
            <person name="Karanyi Z."/>
            <person name="Kato M."/>
            <person name="Keller N."/>
            <person name="Kelly D.E."/>
            <person name="Kiel J.A."/>
            <person name="Kim J.M."/>
            <person name="van der Klei I.J."/>
            <person name="Klis F.M."/>
            <person name="Kovalchuk A."/>
            <person name="Krasevec N."/>
            <person name="Kubicek C.P."/>
            <person name="Liu B."/>
            <person name="Maccabe A."/>
            <person name="Meyer V."/>
            <person name="Mirabito P."/>
            <person name="Miskei M."/>
            <person name="Mos M."/>
            <person name="Mullins J."/>
            <person name="Nelson D.R."/>
            <person name="Nielsen J."/>
            <person name="Oakley B.R."/>
            <person name="Osmani S.A."/>
            <person name="Pakula T."/>
            <person name="Paszewski A."/>
            <person name="Paulsen I."/>
            <person name="Pilsyk S."/>
            <person name="Pocsi I."/>
            <person name="Punt P.J."/>
            <person name="Ram A.F."/>
            <person name="Ren Q."/>
            <person name="Robellet X."/>
            <person name="Robson G."/>
            <person name="Seiboth B."/>
            <person name="van Solingen P."/>
            <person name="Specht T."/>
            <person name="Sun J."/>
            <person name="Taheri-Talesh N."/>
            <person name="Takeshita N."/>
            <person name="Ussery D."/>
            <person name="vanKuyk P.A."/>
            <person name="Visser H."/>
            <person name="van de Vondervoort P.J."/>
            <person name="de Vries R.P."/>
            <person name="Walton J."/>
            <person name="Xiang X."/>
            <person name="Xiong Y."/>
            <person name="Zeng A.P."/>
            <person name="Brandt B.W."/>
            <person name="Cornell M.J."/>
            <person name="van den Hondel C.A."/>
            <person name="Visser J."/>
            <person name="Oliver S.G."/>
            <person name="Turner G."/>
        </authorList>
    </citation>
    <scope>GENOME REANNOTATION</scope>
    <source>
        <strain>FGSC A4 / ATCC 38163 / CBS 112.46 / NRRL 194 / M139</strain>
    </source>
</reference>
<comment type="function">
    <text evidence="1">Probable acetyltransferase, which acetylates the inositol ring of phosphatidylinositol during biosynthesis of GPI-anchor.</text>
</comment>
<comment type="pathway">
    <text>Glycolipid biosynthesis; glycosylphosphatidylinositol-anchor biosynthesis.</text>
</comment>
<comment type="subcellular location">
    <subcellularLocation>
        <location evidence="1">Endoplasmic reticulum membrane</location>
        <topology evidence="1">Multi-pass membrane protein</topology>
    </subcellularLocation>
</comment>
<comment type="similarity">
    <text evidence="3">Belongs to the PIGW family.</text>
</comment>
<sequence>MDPDYKSRKEAFVSNLTGGSILEINAVTLVAPASVFLWSVLQSRLSFFTPYGPAALITDFLLNVLAILFATTFYSSAPWLLNLLLVSPAFLILMNSRSRRTQTKAKPPQTATAQHGPGASLPIHPFLTTYRAAMMIITCIAILAVDFRVFPRRFAKAENWGTSLMDLGVGSFVFSGGVVSARSVLKSRERGASPKKTLTQRFTSSVRHSVPLLVLGLVRLYSVKNLDYAEHVTEYGVHWNFFFTLGFLPPFVELFEGIATLIPSYEVLSLAVAVLYQVALESTDLKSYILVSPRGPDLLSKNREGVFSFLGYLAIFLAGRATGMRIIPGGISPSNTPQQARKRVLTRYGANIPVSRRLANMPYVLWVAAFNNAQLFLFCLIETILFPSVHRASGSGKNDEAKRTDFATSPILTAFNRGGLAVFLVANLLTGAVNLTVPTLDVDKTRAMAILVGYAALITGVALGLNKANIKISL</sequence>